<reference key="1">
    <citation type="journal article" date="2006" name="PLoS Genet.">
        <title>Secrets of soil survival revealed by the genome sequence of Arthrobacter aurescens TC1.</title>
        <authorList>
            <person name="Mongodin E.F."/>
            <person name="Shapir N."/>
            <person name="Daugherty S.C."/>
            <person name="DeBoy R.T."/>
            <person name="Emerson J.B."/>
            <person name="Shvartzbeyn A."/>
            <person name="Radune D."/>
            <person name="Vamathevan J."/>
            <person name="Riggs F."/>
            <person name="Grinberg V."/>
            <person name="Khouri H.M."/>
            <person name="Wackett L.P."/>
            <person name="Nelson K.E."/>
            <person name="Sadowsky M.J."/>
        </authorList>
    </citation>
    <scope>NUCLEOTIDE SEQUENCE [LARGE SCALE GENOMIC DNA]</scope>
    <source>
        <strain>TC1</strain>
    </source>
</reference>
<gene>
    <name type="ordered locus">AAur_3665</name>
</gene>
<name>GCS23_PAEAT</name>
<dbReference type="EC" id="6.3.2.2" evidence="1"/>
<dbReference type="EMBL" id="CP000474">
    <property type="protein sequence ID" value="ABM06492.1"/>
    <property type="molecule type" value="Genomic_DNA"/>
</dbReference>
<dbReference type="SMR" id="A1RAU1"/>
<dbReference type="STRING" id="290340.AAur_3665"/>
<dbReference type="KEGG" id="aau:AAur_3665"/>
<dbReference type="eggNOG" id="COG2170">
    <property type="taxonomic scope" value="Bacteria"/>
</dbReference>
<dbReference type="HOGENOM" id="CLU_044848_0_0_11"/>
<dbReference type="Proteomes" id="UP000000637">
    <property type="component" value="Chromosome"/>
</dbReference>
<dbReference type="GO" id="GO:0005524">
    <property type="term" value="F:ATP binding"/>
    <property type="evidence" value="ECO:0007669"/>
    <property type="project" value="UniProtKB-KW"/>
</dbReference>
<dbReference type="GO" id="GO:0004357">
    <property type="term" value="F:glutamate-cysteine ligase activity"/>
    <property type="evidence" value="ECO:0007669"/>
    <property type="project" value="UniProtKB-EC"/>
</dbReference>
<dbReference type="GO" id="GO:0042398">
    <property type="term" value="P:modified amino acid biosynthetic process"/>
    <property type="evidence" value="ECO:0007669"/>
    <property type="project" value="InterPro"/>
</dbReference>
<dbReference type="Gene3D" id="3.30.590.20">
    <property type="match status" value="1"/>
</dbReference>
<dbReference type="HAMAP" id="MF_01609">
    <property type="entry name" value="Glu_cys_ligase_2"/>
    <property type="match status" value="1"/>
</dbReference>
<dbReference type="InterPro" id="IPR050141">
    <property type="entry name" value="GCL_type2/YbdK_subfam"/>
</dbReference>
<dbReference type="InterPro" id="IPR006336">
    <property type="entry name" value="GCS2"/>
</dbReference>
<dbReference type="InterPro" id="IPR014746">
    <property type="entry name" value="Gln_synth/guanido_kin_cat_dom"/>
</dbReference>
<dbReference type="InterPro" id="IPR011793">
    <property type="entry name" value="YbdK"/>
</dbReference>
<dbReference type="NCBIfam" id="TIGR02050">
    <property type="entry name" value="gshA_cyan_rel"/>
    <property type="match status" value="1"/>
</dbReference>
<dbReference type="NCBIfam" id="NF010041">
    <property type="entry name" value="PRK13517.1-1"/>
    <property type="match status" value="1"/>
</dbReference>
<dbReference type="PANTHER" id="PTHR36510">
    <property type="entry name" value="GLUTAMATE--CYSTEINE LIGASE 2-RELATED"/>
    <property type="match status" value="1"/>
</dbReference>
<dbReference type="PANTHER" id="PTHR36510:SF1">
    <property type="entry name" value="GLUTAMATE--CYSTEINE LIGASE 2-RELATED"/>
    <property type="match status" value="1"/>
</dbReference>
<dbReference type="Pfam" id="PF04107">
    <property type="entry name" value="GCS2"/>
    <property type="match status" value="1"/>
</dbReference>
<dbReference type="SUPFAM" id="SSF55931">
    <property type="entry name" value="Glutamine synthetase/guanido kinase"/>
    <property type="match status" value="1"/>
</dbReference>
<keyword id="KW-0067">ATP-binding</keyword>
<keyword id="KW-0436">Ligase</keyword>
<keyword id="KW-0547">Nucleotide-binding</keyword>
<protein>
    <recommendedName>
        <fullName evidence="1">Putative glutamate--cysteine ligase 2-3</fullName>
        <ecNumber evidence="1">6.3.2.2</ecNumber>
    </recommendedName>
    <alternativeName>
        <fullName evidence="1">Gamma-glutamylcysteine synthetase 2-3</fullName>
        <shortName evidence="1">GCS 2-3</shortName>
        <shortName evidence="1">Gamma-GCS 2-3</shortName>
    </alternativeName>
</protein>
<evidence type="ECO:0000255" key="1">
    <source>
        <dbReference type="HAMAP-Rule" id="MF_01609"/>
    </source>
</evidence>
<evidence type="ECO:0000256" key="2">
    <source>
        <dbReference type="SAM" id="MobiDB-lite"/>
    </source>
</evidence>
<proteinExistence type="inferred from homology"/>
<sequence length="424" mass="46183">MQMAGRGANRRGQHRSPVLVRPPDAEWSMRTFGVEEELLIVDPVTGEPLALADALLAGQDEPTSGLSHELKLEQIETQTRPCHSYGELLQQIRRGRAMANQAARQHGARVAAIATSPLASNTHTTPDPRYAAMLDRFGIIATEQLTCGFHVHTSVESPEEGVVVLDHIRDKLAVLTALTANSPYWRGLPTGFDSYRTQAWNRWPTSGPSSVFGSLTAYRRIVKRLLETGVIMDEGMIYFDARISRNHPTVEVRVADVCLRAEDAALMAVLVRALVETASLEMLDGVEPTAVPTALLRMASWQASNSGLRGDLLDFGDFLPQPAADVVWALVDYLSPVLDDQGELELVKAGISDVLDRGNGAHEQRETAVRYNKRQHDGQTQPGSPPTNEALAAVVGHAAKVTVRGAAADAHKDPAPMLTRVRRP</sequence>
<organism>
    <name type="scientific">Paenarthrobacter aurescens (strain TC1)</name>
    <dbReference type="NCBI Taxonomy" id="290340"/>
    <lineage>
        <taxon>Bacteria</taxon>
        <taxon>Bacillati</taxon>
        <taxon>Actinomycetota</taxon>
        <taxon>Actinomycetes</taxon>
        <taxon>Micrococcales</taxon>
        <taxon>Micrococcaceae</taxon>
        <taxon>Paenarthrobacter</taxon>
    </lineage>
</organism>
<accession>A1RAU1</accession>
<comment type="function">
    <text evidence="1">ATP-dependent carboxylate-amine ligase which exhibits weak glutamate--cysteine ligase activity.</text>
</comment>
<comment type="catalytic activity">
    <reaction evidence="1">
        <text>L-cysteine + L-glutamate + ATP = gamma-L-glutamyl-L-cysteine + ADP + phosphate + H(+)</text>
        <dbReference type="Rhea" id="RHEA:13285"/>
        <dbReference type="ChEBI" id="CHEBI:15378"/>
        <dbReference type="ChEBI" id="CHEBI:29985"/>
        <dbReference type="ChEBI" id="CHEBI:30616"/>
        <dbReference type="ChEBI" id="CHEBI:35235"/>
        <dbReference type="ChEBI" id="CHEBI:43474"/>
        <dbReference type="ChEBI" id="CHEBI:58173"/>
        <dbReference type="ChEBI" id="CHEBI:456216"/>
        <dbReference type="EC" id="6.3.2.2"/>
    </reaction>
</comment>
<comment type="similarity">
    <text evidence="1">Belongs to the glutamate--cysteine ligase type 2 family. YbdK subfamily.</text>
</comment>
<feature type="chain" id="PRO_0000291483" description="Putative glutamate--cysteine ligase 2-3">
    <location>
        <begin position="1"/>
        <end position="424"/>
    </location>
</feature>
<feature type="region of interest" description="Disordered" evidence="2">
    <location>
        <begin position="1"/>
        <end position="20"/>
    </location>
</feature>
<feature type="region of interest" description="Disordered" evidence="2">
    <location>
        <begin position="405"/>
        <end position="424"/>
    </location>
</feature>